<protein>
    <recommendedName>
        <fullName evidence="1">2,3,4,5-tetrahydropyridine-2,6-dicarboxylate N-succinyltransferase</fullName>
        <ecNumber evidence="1">2.3.1.117</ecNumber>
    </recommendedName>
    <alternativeName>
        <fullName evidence="1">Tetrahydrodipicolinate N-succinyltransferase</fullName>
        <shortName evidence="1">THDP succinyltransferase</shortName>
        <shortName evidence="1">THP succinyltransferase</shortName>
        <shortName evidence="1">Tetrahydropicolinate succinylase</shortName>
    </alternativeName>
</protein>
<dbReference type="EC" id="2.3.1.117" evidence="1"/>
<dbReference type="EMBL" id="CP000873">
    <property type="protein sequence ID" value="ABX64191.1"/>
    <property type="molecule type" value="Genomic_DNA"/>
</dbReference>
<dbReference type="RefSeq" id="WP_002965622.1">
    <property type="nucleotide sequence ID" value="NC_010104.1"/>
</dbReference>
<dbReference type="SMR" id="A9MCV4"/>
<dbReference type="GeneID" id="97534922"/>
<dbReference type="KEGG" id="bcs:BCAN_B1049"/>
<dbReference type="HOGENOM" id="CLU_050859_0_1_5"/>
<dbReference type="PhylomeDB" id="A9MCV4"/>
<dbReference type="UniPathway" id="UPA00034">
    <property type="reaction ID" value="UER00019"/>
</dbReference>
<dbReference type="Proteomes" id="UP000001385">
    <property type="component" value="Chromosome II"/>
</dbReference>
<dbReference type="GO" id="GO:0005737">
    <property type="term" value="C:cytoplasm"/>
    <property type="evidence" value="ECO:0007669"/>
    <property type="project" value="UniProtKB-SubCell"/>
</dbReference>
<dbReference type="GO" id="GO:0008666">
    <property type="term" value="F:2,3,4,5-tetrahydropyridine-2,6-dicarboxylate N-succinyltransferase activity"/>
    <property type="evidence" value="ECO:0007669"/>
    <property type="project" value="UniProtKB-UniRule"/>
</dbReference>
<dbReference type="GO" id="GO:0019877">
    <property type="term" value="P:diaminopimelate biosynthetic process"/>
    <property type="evidence" value="ECO:0007669"/>
    <property type="project" value="UniProtKB-UniRule"/>
</dbReference>
<dbReference type="GO" id="GO:0009089">
    <property type="term" value="P:lysine biosynthetic process via diaminopimelate"/>
    <property type="evidence" value="ECO:0007669"/>
    <property type="project" value="UniProtKB-UniRule"/>
</dbReference>
<dbReference type="CDD" id="cd03350">
    <property type="entry name" value="LbH_THP_succinylT"/>
    <property type="match status" value="1"/>
</dbReference>
<dbReference type="Gene3D" id="2.160.10.10">
    <property type="entry name" value="Hexapeptide repeat proteins"/>
    <property type="match status" value="1"/>
</dbReference>
<dbReference type="Gene3D" id="1.10.166.10">
    <property type="entry name" value="Tetrahydrodipicolinate-N-succinyltransferase, N-terminal domain"/>
    <property type="match status" value="1"/>
</dbReference>
<dbReference type="HAMAP" id="MF_00811">
    <property type="entry name" value="DapD"/>
    <property type="match status" value="1"/>
</dbReference>
<dbReference type="InterPro" id="IPR005664">
    <property type="entry name" value="DapD_Trfase_Hexpep_rpt_fam"/>
</dbReference>
<dbReference type="InterPro" id="IPR001451">
    <property type="entry name" value="Hexapep"/>
</dbReference>
<dbReference type="InterPro" id="IPR018357">
    <property type="entry name" value="Hexapep_transf_CS"/>
</dbReference>
<dbReference type="InterPro" id="IPR023180">
    <property type="entry name" value="THP_succinylTrfase_dom1"/>
</dbReference>
<dbReference type="InterPro" id="IPR037133">
    <property type="entry name" value="THP_succinylTrfase_N_sf"/>
</dbReference>
<dbReference type="InterPro" id="IPR050179">
    <property type="entry name" value="Trans_hexapeptide_repeat"/>
</dbReference>
<dbReference type="InterPro" id="IPR011004">
    <property type="entry name" value="Trimer_LpxA-like_sf"/>
</dbReference>
<dbReference type="NCBIfam" id="TIGR00965">
    <property type="entry name" value="dapD"/>
    <property type="match status" value="1"/>
</dbReference>
<dbReference type="NCBIfam" id="NF008808">
    <property type="entry name" value="PRK11830.1"/>
    <property type="match status" value="1"/>
</dbReference>
<dbReference type="PANTHER" id="PTHR43300:SF10">
    <property type="entry name" value="2,3,4,5-TETRAHYDROPYRIDINE-2,6-DICARBOXYLATE N-ACETYLTRANSFERASE"/>
    <property type="match status" value="1"/>
</dbReference>
<dbReference type="PANTHER" id="PTHR43300">
    <property type="entry name" value="ACETYLTRANSFERASE"/>
    <property type="match status" value="1"/>
</dbReference>
<dbReference type="Pfam" id="PF14602">
    <property type="entry name" value="Hexapep_2"/>
    <property type="match status" value="1"/>
</dbReference>
<dbReference type="Pfam" id="PF14805">
    <property type="entry name" value="THDPS_N_2"/>
    <property type="match status" value="1"/>
</dbReference>
<dbReference type="SUPFAM" id="SSF51161">
    <property type="entry name" value="Trimeric LpxA-like enzymes"/>
    <property type="match status" value="1"/>
</dbReference>
<dbReference type="PROSITE" id="PS00101">
    <property type="entry name" value="HEXAPEP_TRANSFERASES"/>
    <property type="match status" value="1"/>
</dbReference>
<organism>
    <name type="scientific">Brucella canis (strain ATCC 23365 / NCTC 10854 / RM-666)</name>
    <dbReference type="NCBI Taxonomy" id="483179"/>
    <lineage>
        <taxon>Bacteria</taxon>
        <taxon>Pseudomonadati</taxon>
        <taxon>Pseudomonadota</taxon>
        <taxon>Alphaproteobacteria</taxon>
        <taxon>Hyphomicrobiales</taxon>
        <taxon>Brucellaceae</taxon>
        <taxon>Brucella/Ochrobactrum group</taxon>
        <taxon>Brucella</taxon>
    </lineage>
</organism>
<name>DAPD_BRUC2</name>
<comment type="catalytic activity">
    <reaction evidence="1">
        <text>(S)-2,3,4,5-tetrahydrodipicolinate + succinyl-CoA + H2O = (S)-2-succinylamino-6-oxoheptanedioate + CoA</text>
        <dbReference type="Rhea" id="RHEA:17325"/>
        <dbReference type="ChEBI" id="CHEBI:15377"/>
        <dbReference type="ChEBI" id="CHEBI:15685"/>
        <dbReference type="ChEBI" id="CHEBI:16845"/>
        <dbReference type="ChEBI" id="CHEBI:57287"/>
        <dbReference type="ChEBI" id="CHEBI:57292"/>
        <dbReference type="EC" id="2.3.1.117"/>
    </reaction>
</comment>
<comment type="pathway">
    <text evidence="1">Amino-acid biosynthesis; L-lysine biosynthesis via DAP pathway; LL-2,6-diaminopimelate from (S)-tetrahydrodipicolinate (succinylase route): step 1/3.</text>
</comment>
<comment type="subunit">
    <text evidence="1">Homotrimer.</text>
</comment>
<comment type="subcellular location">
    <subcellularLocation>
        <location evidence="1">Cytoplasm</location>
    </subcellularLocation>
</comment>
<comment type="similarity">
    <text evidence="1">Belongs to the transferase hexapeptide repeat family.</text>
</comment>
<reference key="1">
    <citation type="submission" date="2007-10" db="EMBL/GenBank/DDBJ databases">
        <title>Brucella canis ATCC 23365 whole genome shotgun sequencing project.</title>
        <authorList>
            <person name="Setubal J.C."/>
            <person name="Bowns C."/>
            <person name="Boyle S."/>
            <person name="Crasta O.R."/>
            <person name="Czar M.J."/>
            <person name="Dharmanolla C."/>
            <person name="Gillespie J.J."/>
            <person name="Kenyon R.W."/>
            <person name="Lu J."/>
            <person name="Mane S."/>
            <person name="Mohapatra S."/>
            <person name="Nagrani S."/>
            <person name="Purkayastha A."/>
            <person name="Rajasimha H.K."/>
            <person name="Shallom J.M."/>
            <person name="Shallom S."/>
            <person name="Shukla M."/>
            <person name="Snyder E.E."/>
            <person name="Sobral B.W."/>
            <person name="Wattam A.R."/>
            <person name="Will R."/>
            <person name="Williams K."/>
            <person name="Yoo H."/>
            <person name="Bruce D."/>
            <person name="Detter C."/>
            <person name="Munk C."/>
            <person name="Brettin T.S."/>
        </authorList>
    </citation>
    <scope>NUCLEOTIDE SEQUENCE [LARGE SCALE GENOMIC DNA]</scope>
    <source>
        <strain>ATCC 23365 / NCTC 10854 / RM-666</strain>
    </source>
</reference>
<gene>
    <name evidence="1" type="primary">dapD</name>
    <name type="ordered locus">BCAN_B1049</name>
</gene>
<accession>A9MCV4</accession>
<proteinExistence type="inferred from homology"/>
<sequence>MTKPDLASLEKTIEKAFDERDGINTATRGEVREAVEQSLILLDRGEVRVAEKQADGNWHVNQWLKKAVLLSFRLNPMEVIKGGPGQSSWWDKVPSKFDGWTANEFEKAGFRAVPNCIVRHSAYIAPNAILMPSFVNLGAYVDKGAMIDTWATVGSCAQIGKNVHLSGGVGIGGVLEPMQAGPTIIEDNCFIGARSEVVEGCIVREGSVLGMGVFIGKSTKIVDRATGEVFYGEVPPYSVVVAGTMPGKNVPGENWGPSLYCAVIVKRADEKTRSKTSINELLRD</sequence>
<keyword id="KW-0012">Acyltransferase</keyword>
<keyword id="KW-0028">Amino-acid biosynthesis</keyword>
<keyword id="KW-0963">Cytoplasm</keyword>
<keyword id="KW-0220">Diaminopimelate biosynthesis</keyword>
<keyword id="KW-0457">Lysine biosynthesis</keyword>
<keyword id="KW-1185">Reference proteome</keyword>
<keyword id="KW-0677">Repeat</keyword>
<keyword id="KW-0808">Transferase</keyword>
<evidence type="ECO:0000255" key="1">
    <source>
        <dbReference type="HAMAP-Rule" id="MF_00811"/>
    </source>
</evidence>
<feature type="chain" id="PRO_1000083746" description="2,3,4,5-tetrahydropyridine-2,6-dicarboxylate N-succinyltransferase">
    <location>
        <begin position="1"/>
        <end position="284"/>
    </location>
</feature>
<feature type="binding site" evidence="1">
    <location>
        <position position="111"/>
    </location>
    <ligand>
        <name>substrate</name>
    </ligand>
</feature>
<feature type="binding site" evidence="1">
    <location>
        <position position="148"/>
    </location>
    <ligand>
        <name>substrate</name>
    </ligand>
</feature>